<sequence length="439" mass="47084">MKKPLRWLAALTVLLLPLSALAQQQGLTIDIVGGSASATPIAVIPMPYQGSGTAPQTDVSAVVGADLDRSGQFRTLPAAQIVEKPTRGTEVQFQTWRTLKQNYIVVGRVMDAGEGAYRVEYELFDVAKGERMLGLAMTARANAMRDVSHQMADAIYEKITGVRGAFWTRIAYVTASGKGGAMRYALMVADSDGYNPQTIVRSAEPLLSPNWSPDGKKLAYVSFERGNSSIYLQDIATGARELVSSFRGINGAPSFSPDGRRLALALSRSGNPEIYVMDLGSKQLTQLTNHFGIDTEPTWAPDGGSIYFTSDRGGRPQIYQVAASGGSANRVTFQGNYNATASVSFDGKKIAVAQGSGNTYRIAMMDRSLGSPSWSTLSPGSLDESPSFAPNASMVLYAAREGGRGVLYAVSSDARVRQRLVLADGDVREPAWGPYRTAH</sequence>
<organism>
    <name type="scientific">Xanthomonas oryzae pv. oryzae (strain KACC10331 / KXO85)</name>
    <dbReference type="NCBI Taxonomy" id="291331"/>
    <lineage>
        <taxon>Bacteria</taxon>
        <taxon>Pseudomonadati</taxon>
        <taxon>Pseudomonadota</taxon>
        <taxon>Gammaproteobacteria</taxon>
        <taxon>Lysobacterales</taxon>
        <taxon>Lysobacteraceae</taxon>
        <taxon>Xanthomonas</taxon>
    </lineage>
</organism>
<feature type="signal peptide" evidence="1">
    <location>
        <begin position="1"/>
        <end position="22"/>
    </location>
</feature>
<feature type="chain" id="PRO_0000034699" description="Tol-Pal system protein TolB" evidence="1">
    <location>
        <begin position="23"/>
        <end position="439"/>
    </location>
</feature>
<name>TOLB_XANOR</name>
<dbReference type="EMBL" id="AE013598">
    <property type="protein sequence ID" value="AAW74922.1"/>
    <property type="status" value="ALT_INIT"/>
    <property type="molecule type" value="Genomic_DNA"/>
</dbReference>
<dbReference type="SMR" id="Q5H299"/>
<dbReference type="STRING" id="291331.XOO1668"/>
<dbReference type="KEGG" id="xoo:XOO1668"/>
<dbReference type="HOGENOM" id="CLU_047123_0_0_6"/>
<dbReference type="Proteomes" id="UP000006735">
    <property type="component" value="Chromosome"/>
</dbReference>
<dbReference type="GO" id="GO:0042597">
    <property type="term" value="C:periplasmic space"/>
    <property type="evidence" value="ECO:0007669"/>
    <property type="project" value="UniProtKB-SubCell"/>
</dbReference>
<dbReference type="GO" id="GO:0051301">
    <property type="term" value="P:cell division"/>
    <property type="evidence" value="ECO:0007669"/>
    <property type="project" value="UniProtKB-UniRule"/>
</dbReference>
<dbReference type="GO" id="GO:0017038">
    <property type="term" value="P:protein import"/>
    <property type="evidence" value="ECO:0007669"/>
    <property type="project" value="InterPro"/>
</dbReference>
<dbReference type="Gene3D" id="2.120.10.30">
    <property type="entry name" value="TolB, C-terminal domain"/>
    <property type="match status" value="1"/>
</dbReference>
<dbReference type="Gene3D" id="3.40.50.10070">
    <property type="entry name" value="TolB, N-terminal domain"/>
    <property type="match status" value="1"/>
</dbReference>
<dbReference type="HAMAP" id="MF_00671">
    <property type="entry name" value="TolB"/>
    <property type="match status" value="1"/>
</dbReference>
<dbReference type="InterPro" id="IPR011042">
    <property type="entry name" value="6-blade_b-propeller_TolB-like"/>
</dbReference>
<dbReference type="InterPro" id="IPR011659">
    <property type="entry name" value="PD40"/>
</dbReference>
<dbReference type="InterPro" id="IPR014167">
    <property type="entry name" value="Tol-Pal_TolB"/>
</dbReference>
<dbReference type="InterPro" id="IPR007195">
    <property type="entry name" value="TolB_N"/>
</dbReference>
<dbReference type="NCBIfam" id="TIGR02800">
    <property type="entry name" value="propeller_TolB"/>
    <property type="match status" value="1"/>
</dbReference>
<dbReference type="PANTHER" id="PTHR36842:SF1">
    <property type="entry name" value="PROTEIN TOLB"/>
    <property type="match status" value="1"/>
</dbReference>
<dbReference type="PANTHER" id="PTHR36842">
    <property type="entry name" value="PROTEIN TOLB HOMOLOG"/>
    <property type="match status" value="1"/>
</dbReference>
<dbReference type="Pfam" id="PF07676">
    <property type="entry name" value="PD40"/>
    <property type="match status" value="3"/>
</dbReference>
<dbReference type="Pfam" id="PF04052">
    <property type="entry name" value="TolB_N"/>
    <property type="match status" value="1"/>
</dbReference>
<dbReference type="SUPFAM" id="SSF52964">
    <property type="entry name" value="TolB, N-terminal domain"/>
    <property type="match status" value="1"/>
</dbReference>
<dbReference type="SUPFAM" id="SSF69304">
    <property type="entry name" value="Tricorn protease N-terminal domain"/>
    <property type="match status" value="1"/>
</dbReference>
<keyword id="KW-0131">Cell cycle</keyword>
<keyword id="KW-0132">Cell division</keyword>
<keyword id="KW-0574">Periplasm</keyword>
<keyword id="KW-1185">Reference proteome</keyword>
<keyword id="KW-0732">Signal</keyword>
<accession>Q5H299</accession>
<reference key="1">
    <citation type="journal article" date="2005" name="Nucleic Acids Res.">
        <title>The genome sequence of Xanthomonas oryzae pathovar oryzae KACC10331, the bacterial blight pathogen of rice.</title>
        <authorList>
            <person name="Lee B.-M."/>
            <person name="Park Y.-J."/>
            <person name="Park D.-S."/>
            <person name="Kang H.-W."/>
            <person name="Kim J.-G."/>
            <person name="Song E.-S."/>
            <person name="Park I.-C."/>
            <person name="Yoon U.-H."/>
            <person name="Hahn J.-H."/>
            <person name="Koo B.-S."/>
            <person name="Lee G.-B."/>
            <person name="Kim H."/>
            <person name="Park H.-S."/>
            <person name="Yoon K.-O."/>
            <person name="Kim J.-H."/>
            <person name="Jung C.-H."/>
            <person name="Koh N.-H."/>
            <person name="Seo J.-S."/>
            <person name="Go S.-J."/>
        </authorList>
    </citation>
    <scope>NUCLEOTIDE SEQUENCE [LARGE SCALE GENOMIC DNA]</scope>
    <source>
        <strain>KACC10331 / KXO85</strain>
    </source>
</reference>
<evidence type="ECO:0000255" key="1">
    <source>
        <dbReference type="HAMAP-Rule" id="MF_00671"/>
    </source>
</evidence>
<evidence type="ECO:0000305" key="2"/>
<comment type="function">
    <text evidence="1">Part of the Tol-Pal system, which plays a role in outer membrane invagination during cell division and is important for maintaining outer membrane integrity.</text>
</comment>
<comment type="subunit">
    <text evidence="1">The Tol-Pal system is composed of five core proteins: the inner membrane proteins TolA, TolQ and TolR, the periplasmic protein TolB and the outer membrane protein Pal. They form a network linking the inner and outer membranes and the peptidoglycan layer.</text>
</comment>
<comment type="subcellular location">
    <subcellularLocation>
        <location evidence="1">Periplasm</location>
    </subcellularLocation>
</comment>
<comment type="similarity">
    <text evidence="1">Belongs to the TolB family.</text>
</comment>
<comment type="sequence caution" evidence="2">
    <conflict type="erroneous initiation">
        <sequence resource="EMBL-CDS" id="AAW74922"/>
    </conflict>
</comment>
<protein>
    <recommendedName>
        <fullName evidence="1">Tol-Pal system protein TolB</fullName>
    </recommendedName>
</protein>
<proteinExistence type="inferred from homology"/>
<gene>
    <name evidence="1" type="primary">tolB</name>
    <name type="ordered locus">XOO1668</name>
</gene>